<accession>O32765</accession>
<gene>
    <name evidence="1" type="primary">ldh</name>
    <name evidence="3" type="synonym">ldhL</name>
</gene>
<comment type="function">
    <text evidence="1 2">Catalyzes the conversion of lactate to pyruvate.</text>
</comment>
<comment type="catalytic activity">
    <reaction evidence="1 2">
        <text>(S)-lactate + NAD(+) = pyruvate + NADH + H(+)</text>
        <dbReference type="Rhea" id="RHEA:23444"/>
        <dbReference type="ChEBI" id="CHEBI:15361"/>
        <dbReference type="ChEBI" id="CHEBI:15378"/>
        <dbReference type="ChEBI" id="CHEBI:16651"/>
        <dbReference type="ChEBI" id="CHEBI:57540"/>
        <dbReference type="ChEBI" id="CHEBI:57945"/>
        <dbReference type="EC" id="1.1.1.27"/>
    </reaction>
</comment>
<comment type="activity regulation">
    <text evidence="2">Under neutral conditions, the reaction is stimulated 4-fold by fructose 1,6-bisphosphate (FBP), however the L-lactate dehydrogenase is a nonallosteric enzyme. Calcium and zinc ions at 1 mM stimulate the activity almost 2-fold. Weakly inhibited by cadmium, cobalt and copper ions.</text>
</comment>
<comment type="biophysicochemical properties">
    <kinetics>
        <KM evidence="2">0.25 mM for pyruvate</KM>
        <text evidence="2">kcat is 643 sec(-1) for pyruvate as substrate.</text>
    </kinetics>
    <phDependence>
        <text evidence="2">Optimum pH is 5.</text>
    </phDependence>
</comment>
<comment type="pathway">
    <text evidence="1">Fermentation; pyruvate fermentation to lactate; (S)-lactate from pyruvate: step 1/1.</text>
</comment>
<comment type="subunit">
    <text evidence="1 2">Homotetramer.</text>
</comment>
<comment type="subcellular location">
    <subcellularLocation>
        <location evidence="1">Cytoplasm</location>
    </subcellularLocation>
</comment>
<comment type="similarity">
    <text evidence="1 4">Belongs to the LDH/MDH superfamily. LDH family.</text>
</comment>
<feature type="initiator methionine" description="Removed" evidence="2">
    <location>
        <position position="1"/>
    </location>
</feature>
<feature type="chain" id="PRO_0000168348" description="L-lactate dehydrogenase">
    <location>
        <begin position="2"/>
        <end position="323"/>
    </location>
</feature>
<feature type="active site" description="Proton acceptor" evidence="1">
    <location>
        <position position="179"/>
    </location>
</feature>
<feature type="binding site" evidence="1">
    <location>
        <position position="18"/>
    </location>
    <ligand>
        <name>NAD(+)</name>
        <dbReference type="ChEBI" id="CHEBI:57540"/>
    </ligand>
</feature>
<feature type="binding site" evidence="1">
    <location>
        <position position="39"/>
    </location>
    <ligand>
        <name>NAD(+)</name>
        <dbReference type="ChEBI" id="CHEBI:57540"/>
    </ligand>
</feature>
<feature type="binding site" evidence="1">
    <location>
        <position position="69"/>
    </location>
    <ligand>
        <name>NAD(+)</name>
        <dbReference type="ChEBI" id="CHEBI:57540"/>
    </ligand>
</feature>
<feature type="binding site" evidence="1">
    <location>
        <begin position="83"/>
        <end position="84"/>
    </location>
    <ligand>
        <name>NAD(+)</name>
        <dbReference type="ChEBI" id="CHEBI:57540"/>
    </ligand>
</feature>
<feature type="binding site" evidence="1">
    <location>
        <position position="86"/>
    </location>
    <ligand>
        <name>substrate</name>
    </ligand>
</feature>
<feature type="binding site" evidence="1">
    <location>
        <position position="92"/>
    </location>
    <ligand>
        <name>substrate</name>
    </ligand>
</feature>
<feature type="binding site" evidence="1">
    <location>
        <position position="105"/>
    </location>
    <ligand>
        <name>NAD(+)</name>
        <dbReference type="ChEBI" id="CHEBI:57540"/>
    </ligand>
</feature>
<feature type="binding site" evidence="1">
    <location>
        <begin position="122"/>
        <end position="124"/>
    </location>
    <ligand>
        <name>NAD(+)</name>
        <dbReference type="ChEBI" id="CHEBI:57540"/>
    </ligand>
</feature>
<feature type="binding site" evidence="1">
    <location>
        <begin position="124"/>
        <end position="127"/>
    </location>
    <ligand>
        <name>substrate</name>
    </ligand>
</feature>
<feature type="binding site" evidence="1">
    <location>
        <position position="147"/>
    </location>
    <ligand>
        <name>NAD(+)</name>
        <dbReference type="ChEBI" id="CHEBI:57540"/>
    </ligand>
</feature>
<feature type="binding site" evidence="1">
    <location>
        <begin position="152"/>
        <end position="155"/>
    </location>
    <ligand>
        <name>substrate</name>
    </ligand>
</feature>
<feature type="binding site" evidence="1">
    <location>
        <position position="232"/>
    </location>
    <ligand>
        <name>substrate</name>
    </ligand>
</feature>
<feature type="modified residue" description="Phosphotyrosine" evidence="1">
    <location>
        <position position="223"/>
    </location>
</feature>
<name>LDH_LACHE</name>
<organism>
    <name type="scientific">Lactobacillus helveticus</name>
    <name type="common">Lactobacillus suntoryeus</name>
    <dbReference type="NCBI Taxonomy" id="1587"/>
    <lineage>
        <taxon>Bacteria</taxon>
        <taxon>Bacillati</taxon>
        <taxon>Bacillota</taxon>
        <taxon>Bacilli</taxon>
        <taxon>Lactobacillales</taxon>
        <taxon>Lactobacillaceae</taxon>
        <taxon>Lactobacillus</taxon>
    </lineage>
</organism>
<protein>
    <recommendedName>
        <fullName evidence="1 3">L-lactate dehydrogenase</fullName>
        <shortName evidence="1 3">L-LDH</shortName>
        <ecNumber evidence="1 2">1.1.1.27</ecNumber>
    </recommendedName>
</protein>
<dbReference type="EC" id="1.1.1.27" evidence="1 2"/>
<dbReference type="EMBL" id="Z81318">
    <property type="protein sequence ID" value="CAB03618.1"/>
    <property type="molecule type" value="Genomic_DNA"/>
</dbReference>
<dbReference type="RefSeq" id="WP_012211363.1">
    <property type="nucleotide sequence ID" value="NZ_WCHF01000009.1"/>
</dbReference>
<dbReference type="SMR" id="O32765"/>
<dbReference type="eggNOG" id="COG0039">
    <property type="taxonomic scope" value="Bacteria"/>
</dbReference>
<dbReference type="OMA" id="THLDSMR"/>
<dbReference type="OrthoDB" id="9802969at2"/>
<dbReference type="SABIO-RK" id="O32765"/>
<dbReference type="UniPathway" id="UPA00554">
    <property type="reaction ID" value="UER00611"/>
</dbReference>
<dbReference type="GO" id="GO:0005737">
    <property type="term" value="C:cytoplasm"/>
    <property type="evidence" value="ECO:0007669"/>
    <property type="project" value="UniProtKB-SubCell"/>
</dbReference>
<dbReference type="GO" id="GO:0004459">
    <property type="term" value="F:L-lactate dehydrogenase activity"/>
    <property type="evidence" value="ECO:0007669"/>
    <property type="project" value="UniProtKB-UniRule"/>
</dbReference>
<dbReference type="GO" id="GO:0006096">
    <property type="term" value="P:glycolytic process"/>
    <property type="evidence" value="ECO:0007669"/>
    <property type="project" value="UniProtKB-UniRule"/>
</dbReference>
<dbReference type="GO" id="GO:0006089">
    <property type="term" value="P:lactate metabolic process"/>
    <property type="evidence" value="ECO:0007669"/>
    <property type="project" value="TreeGrafter"/>
</dbReference>
<dbReference type="CDD" id="cd05291">
    <property type="entry name" value="HicDH_like"/>
    <property type="match status" value="1"/>
</dbReference>
<dbReference type="FunFam" id="3.40.50.720:FF:000018">
    <property type="entry name" value="Malate dehydrogenase"/>
    <property type="match status" value="1"/>
</dbReference>
<dbReference type="Gene3D" id="3.90.110.10">
    <property type="entry name" value="Lactate dehydrogenase/glycoside hydrolase, family 4, C-terminal"/>
    <property type="match status" value="1"/>
</dbReference>
<dbReference type="Gene3D" id="3.40.50.720">
    <property type="entry name" value="NAD(P)-binding Rossmann-like Domain"/>
    <property type="match status" value="1"/>
</dbReference>
<dbReference type="HAMAP" id="MF_00488">
    <property type="entry name" value="Lactate_dehydrog"/>
    <property type="match status" value="1"/>
</dbReference>
<dbReference type="InterPro" id="IPR001557">
    <property type="entry name" value="L-lactate/malate_DH"/>
</dbReference>
<dbReference type="InterPro" id="IPR011304">
    <property type="entry name" value="L-lactate_DH"/>
</dbReference>
<dbReference type="InterPro" id="IPR018177">
    <property type="entry name" value="L-lactate_DH_AS"/>
</dbReference>
<dbReference type="InterPro" id="IPR022383">
    <property type="entry name" value="Lactate/malate_DH_C"/>
</dbReference>
<dbReference type="InterPro" id="IPR001236">
    <property type="entry name" value="Lactate/malate_DH_N"/>
</dbReference>
<dbReference type="InterPro" id="IPR015955">
    <property type="entry name" value="Lactate_DH/Glyco_Ohase_4_C"/>
</dbReference>
<dbReference type="InterPro" id="IPR036291">
    <property type="entry name" value="NAD(P)-bd_dom_sf"/>
</dbReference>
<dbReference type="NCBIfam" id="TIGR01771">
    <property type="entry name" value="L-LDH-NAD"/>
    <property type="match status" value="1"/>
</dbReference>
<dbReference type="NCBIfam" id="NF000824">
    <property type="entry name" value="PRK00066.1"/>
    <property type="match status" value="1"/>
</dbReference>
<dbReference type="PANTHER" id="PTHR43128">
    <property type="entry name" value="L-2-HYDROXYCARBOXYLATE DEHYDROGENASE (NAD(P)(+))"/>
    <property type="match status" value="1"/>
</dbReference>
<dbReference type="PANTHER" id="PTHR43128:SF16">
    <property type="entry name" value="L-LACTATE DEHYDROGENASE"/>
    <property type="match status" value="1"/>
</dbReference>
<dbReference type="Pfam" id="PF02866">
    <property type="entry name" value="Ldh_1_C"/>
    <property type="match status" value="1"/>
</dbReference>
<dbReference type="Pfam" id="PF00056">
    <property type="entry name" value="Ldh_1_N"/>
    <property type="match status" value="1"/>
</dbReference>
<dbReference type="PIRSF" id="PIRSF000102">
    <property type="entry name" value="Lac_mal_DH"/>
    <property type="match status" value="1"/>
</dbReference>
<dbReference type="PRINTS" id="PR00086">
    <property type="entry name" value="LLDHDRGNASE"/>
</dbReference>
<dbReference type="SUPFAM" id="SSF56327">
    <property type="entry name" value="LDH C-terminal domain-like"/>
    <property type="match status" value="1"/>
</dbReference>
<dbReference type="SUPFAM" id="SSF51735">
    <property type="entry name" value="NAD(P)-binding Rossmann-fold domains"/>
    <property type="match status" value="1"/>
</dbReference>
<dbReference type="PROSITE" id="PS00064">
    <property type="entry name" value="L_LDH"/>
    <property type="match status" value="1"/>
</dbReference>
<sequence length="323" mass="35111">MAREEKPRKVILVGDGAVGSTFAFSMVQQGIAEELGIIDIAKEHVEGDAIDLADATPWTSPKNIYAADYPDCKDADLVVITAGAPQKPGETRLDLVNKNLKILSSIVEPVVESGFEGIFLVVANPVDILTHATWRMSGFPKDRVIGSGTSLDTGRLQKVIGKMENVDPSSVNAYMLGEHGDTEFPAWSYNNVAGVKVADWVKAHNMPESKLEDIHQEVKDMAYDIINKKGATFYGIGTASAMIAKAILNDEHRVLPLSVPMDGEYGLHDLHIGTPAVVGRKGLEQVIEMPLSDKEQELMTASADQLKKVMDKAFKETGVKVRQ</sequence>
<keyword id="KW-0963">Cytoplasm</keyword>
<keyword id="KW-0903">Direct protein sequencing</keyword>
<keyword id="KW-0520">NAD</keyword>
<keyword id="KW-0560">Oxidoreductase</keyword>
<keyword id="KW-0597">Phosphoprotein</keyword>
<proteinExistence type="evidence at protein level"/>
<reference key="1">
    <citation type="journal article" date="1997" name="Appl. Environ. Microbiol.">
        <title>Molecular genetic characterization of the L-lactate dehydrogenase gene (ldhL) of Lactobacillus helveticus and biochemical characterization of the enzyme.</title>
        <authorList>
            <person name="Savijoki K."/>
            <person name="Palva A."/>
        </authorList>
    </citation>
    <scope>NUCLEOTIDE SEQUENCE [GENOMIC DNA]</scope>
    <scope>PROTEIN SEQUENCE OF 2-21 AND 59-87</scope>
    <scope>FUNCTION</scope>
    <scope>CATALYTIC ACTIVITY</scope>
    <scope>BIOPHYSICOCHEMICAL PROPERTIES</scope>
    <scope>ACTIVITY REGULATION</scope>
    <scope>SUBUNIT</scope>
    <source>
        <strain>53/7</strain>
    </source>
</reference>
<evidence type="ECO:0000255" key="1">
    <source>
        <dbReference type="HAMAP-Rule" id="MF_00488"/>
    </source>
</evidence>
<evidence type="ECO:0000269" key="2">
    <source>
    </source>
</evidence>
<evidence type="ECO:0000303" key="3">
    <source>
    </source>
</evidence>
<evidence type="ECO:0000305" key="4"/>